<keyword id="KW-0067">ATP-binding</keyword>
<keyword id="KW-0436">Ligase</keyword>
<keyword id="KW-0547">Nucleotide-binding</keyword>
<keyword id="KW-0658">Purine biosynthesis</keyword>
<keyword id="KW-1185">Reference proteome</keyword>
<feature type="chain" id="PRO_1000117844" description="Phosphoribosylaminoimidazole-succinocarboxamide synthase">
    <location>
        <begin position="1"/>
        <end position="367"/>
    </location>
</feature>
<reference key="1">
    <citation type="submission" date="2007-02" db="EMBL/GenBank/DDBJ databases">
        <title>Complete sequence of chromosome of Shewanella baltica OS155.</title>
        <authorList>
            <consortium name="US DOE Joint Genome Institute"/>
            <person name="Copeland A."/>
            <person name="Lucas S."/>
            <person name="Lapidus A."/>
            <person name="Barry K."/>
            <person name="Detter J.C."/>
            <person name="Glavina del Rio T."/>
            <person name="Hammon N."/>
            <person name="Israni S."/>
            <person name="Dalin E."/>
            <person name="Tice H."/>
            <person name="Pitluck S."/>
            <person name="Sims D.R."/>
            <person name="Brettin T."/>
            <person name="Bruce D."/>
            <person name="Han C."/>
            <person name="Tapia R."/>
            <person name="Brainard J."/>
            <person name="Schmutz J."/>
            <person name="Larimer F."/>
            <person name="Land M."/>
            <person name="Hauser L."/>
            <person name="Kyrpides N."/>
            <person name="Mikhailova N."/>
            <person name="Brettar I."/>
            <person name="Klappenbach J."/>
            <person name="Konstantinidis K."/>
            <person name="Rodrigues J."/>
            <person name="Tiedje J."/>
            <person name="Richardson P."/>
        </authorList>
    </citation>
    <scope>NUCLEOTIDE SEQUENCE [LARGE SCALE GENOMIC DNA]</scope>
    <source>
        <strain>OS155 / ATCC BAA-1091</strain>
    </source>
</reference>
<comment type="catalytic activity">
    <reaction evidence="1">
        <text>5-amino-1-(5-phospho-D-ribosyl)imidazole-4-carboxylate + L-aspartate + ATP = (2S)-2-[5-amino-1-(5-phospho-beta-D-ribosyl)imidazole-4-carboxamido]succinate + ADP + phosphate + 2 H(+)</text>
        <dbReference type="Rhea" id="RHEA:22628"/>
        <dbReference type="ChEBI" id="CHEBI:15378"/>
        <dbReference type="ChEBI" id="CHEBI:29991"/>
        <dbReference type="ChEBI" id="CHEBI:30616"/>
        <dbReference type="ChEBI" id="CHEBI:43474"/>
        <dbReference type="ChEBI" id="CHEBI:58443"/>
        <dbReference type="ChEBI" id="CHEBI:77657"/>
        <dbReference type="ChEBI" id="CHEBI:456216"/>
        <dbReference type="EC" id="6.3.2.6"/>
    </reaction>
</comment>
<comment type="pathway">
    <text evidence="1">Purine metabolism; IMP biosynthesis via de novo pathway; 5-amino-1-(5-phospho-D-ribosyl)imidazole-4-carboxamide from 5-amino-1-(5-phospho-D-ribosyl)imidazole-4-carboxylate: step 1/2.</text>
</comment>
<comment type="similarity">
    <text evidence="1">Belongs to the SAICAR synthetase family.</text>
</comment>
<evidence type="ECO:0000255" key="1">
    <source>
        <dbReference type="HAMAP-Rule" id="MF_00137"/>
    </source>
</evidence>
<gene>
    <name evidence="1" type="primary">purC</name>
    <name type="ordered locus">Sbal_3785</name>
</gene>
<proteinExistence type="inferred from homology"/>
<name>PUR7_SHEB5</name>
<accession>A3D944</accession>
<protein>
    <recommendedName>
        <fullName evidence="1">Phosphoribosylaminoimidazole-succinocarboxamide synthase</fullName>
        <ecNumber evidence="1">6.3.2.6</ecNumber>
    </recommendedName>
    <alternativeName>
        <fullName evidence="1">SAICAR synthetase</fullName>
    </alternativeName>
</protein>
<sequence>MSLADSVLAINNDLPIRTDSPVHSGKVRSVYWLTDADSRRLITTKGYNVPEDTPLAIMVISDRISAFDCIFHGEGGLKGIPGKGAALNAISNHWFKLFAENGLADSHILDIPHPFVWIVQKARPIKVEAICRQYITGSMWRAYSKGERVFCGITLPEGLEKAQKLPELLITPSTKGILTGIPGVPAQDDVNISRSDIEANYQAFGFEKLSDIDLYEKLLKDGFKVISKALADIDQVFVDTKFEFGYVTDKDGNSKLIYMDEVGTPDSSRIWDGAAYRDGKILENSKEGFRQFLLNHFPDPDVLLNKDRMPEREALARDNDLPLEAMMQVSRTYTGVAEKVTGAPIPLPANPKADIIKILKDEYDLIV</sequence>
<dbReference type="EC" id="6.3.2.6" evidence="1"/>
<dbReference type="EMBL" id="CP000563">
    <property type="protein sequence ID" value="ABN63257.1"/>
    <property type="molecule type" value="Genomic_DNA"/>
</dbReference>
<dbReference type="RefSeq" id="WP_011847905.1">
    <property type="nucleotide sequence ID" value="NC_009052.1"/>
</dbReference>
<dbReference type="SMR" id="A3D944"/>
<dbReference type="STRING" id="325240.Sbal_3785"/>
<dbReference type="KEGG" id="sbl:Sbal_3785"/>
<dbReference type="HOGENOM" id="CLU_064197_0_0_6"/>
<dbReference type="OrthoDB" id="9801549at2"/>
<dbReference type="UniPathway" id="UPA00074">
    <property type="reaction ID" value="UER00131"/>
</dbReference>
<dbReference type="Proteomes" id="UP000001557">
    <property type="component" value="Chromosome"/>
</dbReference>
<dbReference type="GO" id="GO:0005737">
    <property type="term" value="C:cytoplasm"/>
    <property type="evidence" value="ECO:0007669"/>
    <property type="project" value="TreeGrafter"/>
</dbReference>
<dbReference type="GO" id="GO:0005524">
    <property type="term" value="F:ATP binding"/>
    <property type="evidence" value="ECO:0007669"/>
    <property type="project" value="UniProtKB-KW"/>
</dbReference>
<dbReference type="GO" id="GO:0004639">
    <property type="term" value="F:phosphoribosylaminoimidazolesuccinocarboxamide synthase activity"/>
    <property type="evidence" value="ECO:0007669"/>
    <property type="project" value="UniProtKB-UniRule"/>
</dbReference>
<dbReference type="GO" id="GO:0006189">
    <property type="term" value="P:'de novo' IMP biosynthetic process"/>
    <property type="evidence" value="ECO:0007669"/>
    <property type="project" value="UniProtKB-UniRule"/>
</dbReference>
<dbReference type="CDD" id="cd01414">
    <property type="entry name" value="SAICAR_synt_Sc"/>
    <property type="match status" value="1"/>
</dbReference>
<dbReference type="FunFam" id="3.30.200.20:FF:000597">
    <property type="entry name" value="Phosphoribosylaminoimidazole-succinocarboxamide synthase"/>
    <property type="match status" value="1"/>
</dbReference>
<dbReference type="FunFam" id="3.30.470.20:FF:000067">
    <property type="entry name" value="Phosphoribosylaminoimidazole-succinocarboxamide synthase"/>
    <property type="match status" value="1"/>
</dbReference>
<dbReference type="Gene3D" id="3.30.470.20">
    <property type="entry name" value="ATP-grasp fold, B domain"/>
    <property type="match status" value="1"/>
</dbReference>
<dbReference type="Gene3D" id="3.30.200.20">
    <property type="entry name" value="Phosphorylase Kinase, domain 1"/>
    <property type="match status" value="1"/>
</dbReference>
<dbReference type="HAMAP" id="MF_00137">
    <property type="entry name" value="SAICAR_synth"/>
    <property type="match status" value="1"/>
</dbReference>
<dbReference type="InterPro" id="IPR028923">
    <property type="entry name" value="SAICAR_synt/ADE2_N"/>
</dbReference>
<dbReference type="InterPro" id="IPR014106">
    <property type="entry name" value="SAICAR_synthase_Vibrio-typ"/>
</dbReference>
<dbReference type="InterPro" id="IPR018236">
    <property type="entry name" value="SAICAR_synthetase_CS"/>
</dbReference>
<dbReference type="NCBIfam" id="NF010567">
    <property type="entry name" value="PRK13960.1"/>
    <property type="match status" value="1"/>
</dbReference>
<dbReference type="NCBIfam" id="TIGR02735">
    <property type="entry name" value="purC_vibrio"/>
    <property type="match status" value="1"/>
</dbReference>
<dbReference type="PANTHER" id="PTHR43700">
    <property type="entry name" value="PHOSPHORIBOSYLAMINOIMIDAZOLE-SUCCINOCARBOXAMIDE SYNTHASE"/>
    <property type="match status" value="1"/>
</dbReference>
<dbReference type="PANTHER" id="PTHR43700:SF1">
    <property type="entry name" value="PHOSPHORIBOSYLAMINOIMIDAZOLE-SUCCINOCARBOXAMIDE SYNTHASE"/>
    <property type="match status" value="1"/>
</dbReference>
<dbReference type="Pfam" id="PF01259">
    <property type="entry name" value="SAICAR_synt"/>
    <property type="match status" value="1"/>
</dbReference>
<dbReference type="SUPFAM" id="SSF56104">
    <property type="entry name" value="SAICAR synthase-like"/>
    <property type="match status" value="1"/>
</dbReference>
<dbReference type="PROSITE" id="PS01057">
    <property type="entry name" value="SAICAR_SYNTHETASE_1"/>
    <property type="match status" value="1"/>
</dbReference>
<organism>
    <name type="scientific">Shewanella baltica (strain OS155 / ATCC BAA-1091)</name>
    <dbReference type="NCBI Taxonomy" id="325240"/>
    <lineage>
        <taxon>Bacteria</taxon>
        <taxon>Pseudomonadati</taxon>
        <taxon>Pseudomonadota</taxon>
        <taxon>Gammaproteobacteria</taxon>
        <taxon>Alteromonadales</taxon>
        <taxon>Shewanellaceae</taxon>
        <taxon>Shewanella</taxon>
    </lineage>
</organism>